<organism>
    <name type="scientific">Staphylococcus epidermidis (strain ATCC 35984 / DSM 28319 / BCRC 17069 / CCUG 31568 / BM 3577 / RP62A)</name>
    <dbReference type="NCBI Taxonomy" id="176279"/>
    <lineage>
        <taxon>Bacteria</taxon>
        <taxon>Bacillati</taxon>
        <taxon>Bacillota</taxon>
        <taxon>Bacilli</taxon>
        <taxon>Bacillales</taxon>
        <taxon>Staphylococcaceae</taxon>
        <taxon>Staphylococcus</taxon>
    </lineage>
</organism>
<sequence length="224" mass="25855">MINCLIVDDDKKLLQYVSSHLERESIQTHTFTSGEASLDFLENKNVDIAIVDIMMSGMDGFELCQTLKDDYHIPVIMLTARDALSDKERAFLSGTDDYVTKPFEVKELLFRIKAVLRRYQINADNELQLGNLILNQSYMEITVGSKTMNLPNKEFQLLFLLASNPKHIFTRDDIIEKIWGFDYEGDDRTVDVHIKRLRQRLSKLKSSVSIQTVRGQGYRVDQNV</sequence>
<dbReference type="EMBL" id="CP000029">
    <property type="protein sequence ID" value="AAW52835.1"/>
    <property type="molecule type" value="Genomic_DNA"/>
</dbReference>
<dbReference type="RefSeq" id="WP_001831555.1">
    <property type="nucleotide sequence ID" value="NC_002976.3"/>
</dbReference>
<dbReference type="SMR" id="Q5HLN2"/>
<dbReference type="STRING" id="176279.SERP1953"/>
<dbReference type="KEGG" id="ser:SERP1953"/>
<dbReference type="eggNOG" id="COG0745">
    <property type="taxonomic scope" value="Bacteria"/>
</dbReference>
<dbReference type="HOGENOM" id="CLU_000445_30_4_9"/>
<dbReference type="Proteomes" id="UP000000531">
    <property type="component" value="Chromosome"/>
</dbReference>
<dbReference type="GO" id="GO:0005829">
    <property type="term" value="C:cytosol"/>
    <property type="evidence" value="ECO:0007669"/>
    <property type="project" value="TreeGrafter"/>
</dbReference>
<dbReference type="GO" id="GO:0032993">
    <property type="term" value="C:protein-DNA complex"/>
    <property type="evidence" value="ECO:0007669"/>
    <property type="project" value="TreeGrafter"/>
</dbReference>
<dbReference type="GO" id="GO:0000156">
    <property type="term" value="F:phosphorelay response regulator activity"/>
    <property type="evidence" value="ECO:0007669"/>
    <property type="project" value="TreeGrafter"/>
</dbReference>
<dbReference type="GO" id="GO:0000976">
    <property type="term" value="F:transcription cis-regulatory region binding"/>
    <property type="evidence" value="ECO:0007669"/>
    <property type="project" value="TreeGrafter"/>
</dbReference>
<dbReference type="GO" id="GO:0006355">
    <property type="term" value="P:regulation of DNA-templated transcription"/>
    <property type="evidence" value="ECO:0007669"/>
    <property type="project" value="InterPro"/>
</dbReference>
<dbReference type="CDD" id="cd17574">
    <property type="entry name" value="REC_OmpR"/>
    <property type="match status" value="1"/>
</dbReference>
<dbReference type="CDD" id="cd00383">
    <property type="entry name" value="trans_reg_C"/>
    <property type="match status" value="1"/>
</dbReference>
<dbReference type="FunFam" id="1.10.10.10:FF:000018">
    <property type="entry name" value="DNA-binding response regulator ResD"/>
    <property type="match status" value="1"/>
</dbReference>
<dbReference type="Gene3D" id="3.40.50.2300">
    <property type="match status" value="1"/>
</dbReference>
<dbReference type="Gene3D" id="6.10.250.690">
    <property type="match status" value="1"/>
</dbReference>
<dbReference type="Gene3D" id="1.10.10.10">
    <property type="entry name" value="Winged helix-like DNA-binding domain superfamily/Winged helix DNA-binding domain"/>
    <property type="match status" value="1"/>
</dbReference>
<dbReference type="InterPro" id="IPR011006">
    <property type="entry name" value="CheY-like_superfamily"/>
</dbReference>
<dbReference type="InterPro" id="IPR001867">
    <property type="entry name" value="OmpR/PhoB-type_DNA-bd"/>
</dbReference>
<dbReference type="InterPro" id="IPR001789">
    <property type="entry name" value="Sig_transdc_resp-reg_receiver"/>
</dbReference>
<dbReference type="InterPro" id="IPR039420">
    <property type="entry name" value="WalR-like"/>
</dbReference>
<dbReference type="InterPro" id="IPR036388">
    <property type="entry name" value="WH-like_DNA-bd_sf"/>
</dbReference>
<dbReference type="PANTHER" id="PTHR48111:SF49">
    <property type="entry name" value="HEME RESPONSE REGULATOR HSSR"/>
    <property type="match status" value="1"/>
</dbReference>
<dbReference type="PANTHER" id="PTHR48111">
    <property type="entry name" value="REGULATOR OF RPOS"/>
    <property type="match status" value="1"/>
</dbReference>
<dbReference type="Pfam" id="PF00072">
    <property type="entry name" value="Response_reg"/>
    <property type="match status" value="1"/>
</dbReference>
<dbReference type="Pfam" id="PF00486">
    <property type="entry name" value="Trans_reg_C"/>
    <property type="match status" value="1"/>
</dbReference>
<dbReference type="SMART" id="SM00448">
    <property type="entry name" value="REC"/>
    <property type="match status" value="1"/>
</dbReference>
<dbReference type="SMART" id="SM00862">
    <property type="entry name" value="Trans_reg_C"/>
    <property type="match status" value="1"/>
</dbReference>
<dbReference type="SUPFAM" id="SSF52172">
    <property type="entry name" value="CheY-like"/>
    <property type="match status" value="1"/>
</dbReference>
<dbReference type="PROSITE" id="PS51755">
    <property type="entry name" value="OMPR_PHOB"/>
    <property type="match status" value="1"/>
</dbReference>
<dbReference type="PROSITE" id="PS50110">
    <property type="entry name" value="RESPONSE_REGULATORY"/>
    <property type="match status" value="1"/>
</dbReference>
<proteinExistence type="inferred from homology"/>
<reference key="1">
    <citation type="journal article" date="2005" name="J. Bacteriol.">
        <title>Insights on evolution of virulence and resistance from the complete genome analysis of an early methicillin-resistant Staphylococcus aureus strain and a biofilm-producing methicillin-resistant Staphylococcus epidermidis strain.</title>
        <authorList>
            <person name="Gill S.R."/>
            <person name="Fouts D.E."/>
            <person name="Archer G.L."/>
            <person name="Mongodin E.F."/>
            <person name="DeBoy R.T."/>
            <person name="Ravel J."/>
            <person name="Paulsen I.T."/>
            <person name="Kolonay J.F."/>
            <person name="Brinkac L.M."/>
            <person name="Beanan M.J."/>
            <person name="Dodson R.J."/>
            <person name="Daugherty S.C."/>
            <person name="Madupu R."/>
            <person name="Angiuoli S.V."/>
            <person name="Durkin A.S."/>
            <person name="Haft D.H."/>
            <person name="Vamathevan J.J."/>
            <person name="Khouri H."/>
            <person name="Utterback T.R."/>
            <person name="Lee C."/>
            <person name="Dimitrov G."/>
            <person name="Jiang L."/>
            <person name="Qin H."/>
            <person name="Weidman J."/>
            <person name="Tran K."/>
            <person name="Kang K.H."/>
            <person name="Hance I.R."/>
            <person name="Nelson K.E."/>
            <person name="Fraser C.M."/>
        </authorList>
    </citation>
    <scope>NUCLEOTIDE SEQUENCE [LARGE SCALE GENOMIC DNA]</scope>
    <source>
        <strain>ATCC 35984 / DSM 28319 / BCRC 17069 / CCUG 31568 / BM 3577 / RP62A</strain>
    </source>
</reference>
<feature type="chain" id="PRO_0000331334" description="Heme response regulator HssR">
    <location>
        <begin position="1"/>
        <end position="224"/>
    </location>
</feature>
<feature type="domain" description="Response regulatory" evidence="2">
    <location>
        <begin position="3"/>
        <end position="116"/>
    </location>
</feature>
<feature type="DNA-binding region" description="OmpR/PhoB-type" evidence="3">
    <location>
        <begin position="124"/>
        <end position="222"/>
    </location>
</feature>
<feature type="modified residue" description="4-aspartylphosphate" evidence="2">
    <location>
        <position position="52"/>
    </location>
</feature>
<gene>
    <name type="primary">hssR</name>
    <name type="ordered locus">SERP1953</name>
</gene>
<keyword id="KW-0010">Activator</keyword>
<keyword id="KW-0963">Cytoplasm</keyword>
<keyword id="KW-0238">DNA-binding</keyword>
<keyword id="KW-0597">Phosphoprotein</keyword>
<keyword id="KW-1185">Reference proteome</keyword>
<keyword id="KW-0804">Transcription</keyword>
<keyword id="KW-0805">Transcription regulation</keyword>
<keyword id="KW-0902">Two-component regulatory system</keyword>
<keyword id="KW-0843">Virulence</keyword>
<evidence type="ECO:0000250" key="1"/>
<evidence type="ECO:0000255" key="2">
    <source>
        <dbReference type="PROSITE-ProRule" id="PRU00169"/>
    </source>
</evidence>
<evidence type="ECO:0000255" key="3">
    <source>
        <dbReference type="PROSITE-ProRule" id="PRU01091"/>
    </source>
</evidence>
<evidence type="ECO:0000305" key="4"/>
<accession>Q5HLN2</accession>
<comment type="function">
    <text evidence="1">Member of the two-component regulatory system HssS/HssR involved in intracellular heme homeostasis and tempering of staphylococcal virulence. Phosphorylated HssR binds to a direct repeat sequence within hrtAB promoter and activates the expression of hrtAB, an efflux pump, in response to extracellular heme, hemin, hemoglobin or blood (By similarity).</text>
</comment>
<comment type="subcellular location">
    <subcellularLocation>
        <location evidence="4">Cytoplasm</location>
    </subcellularLocation>
</comment>
<comment type="PTM">
    <text evidence="1">Phosphorylated by HssS.</text>
</comment>
<protein>
    <recommendedName>
        <fullName>Heme response regulator HssR</fullName>
    </recommendedName>
</protein>
<name>HSSR_STAEQ</name>